<feature type="chain" id="PRO_1000069466" description="Pyridoxal 5'-phosphate synthase subunit PdxT">
    <location>
        <begin position="1"/>
        <end position="187"/>
    </location>
</feature>
<feature type="active site" description="Nucleophile" evidence="1">
    <location>
        <position position="76"/>
    </location>
</feature>
<feature type="active site" description="Charge relay system" evidence="1">
    <location>
        <position position="165"/>
    </location>
</feature>
<feature type="active site" description="Charge relay system" evidence="1">
    <location>
        <position position="167"/>
    </location>
</feature>
<feature type="binding site" evidence="1">
    <location>
        <begin position="47"/>
        <end position="49"/>
    </location>
    <ligand>
        <name>L-glutamine</name>
        <dbReference type="ChEBI" id="CHEBI:58359"/>
    </ligand>
</feature>
<feature type="binding site" evidence="1">
    <location>
        <position position="102"/>
    </location>
    <ligand>
        <name>L-glutamine</name>
        <dbReference type="ChEBI" id="CHEBI:58359"/>
    </ligand>
</feature>
<feature type="binding site" evidence="1">
    <location>
        <begin position="128"/>
        <end position="129"/>
    </location>
    <ligand>
        <name>L-glutamine</name>
        <dbReference type="ChEBI" id="CHEBI:58359"/>
    </ligand>
</feature>
<reference key="1">
    <citation type="submission" date="2007-06" db="EMBL/GenBank/DDBJ databases">
        <title>Complete sequence of Methanococcus vannielii SB.</title>
        <authorList>
            <consortium name="US DOE Joint Genome Institute"/>
            <person name="Copeland A."/>
            <person name="Lucas S."/>
            <person name="Lapidus A."/>
            <person name="Barry K."/>
            <person name="Glavina del Rio T."/>
            <person name="Dalin E."/>
            <person name="Tice H."/>
            <person name="Pitluck S."/>
            <person name="Chain P."/>
            <person name="Malfatti S."/>
            <person name="Shin M."/>
            <person name="Vergez L."/>
            <person name="Schmutz J."/>
            <person name="Larimer F."/>
            <person name="Land M."/>
            <person name="Hauser L."/>
            <person name="Kyrpides N."/>
            <person name="Anderson I."/>
            <person name="Sieprawska-Lupa M."/>
            <person name="Whitman W.B."/>
            <person name="Richardson P."/>
        </authorList>
    </citation>
    <scope>NUCLEOTIDE SEQUENCE [LARGE SCALE GENOMIC DNA]</scope>
    <source>
        <strain>ATCC 35089 / DSM 1224 / JCM 13029 / OCM 148 / SB</strain>
    </source>
</reference>
<organism>
    <name type="scientific">Methanococcus vannielii (strain ATCC 35089 / DSM 1224 / JCM 13029 / OCM 148 / SB)</name>
    <dbReference type="NCBI Taxonomy" id="406327"/>
    <lineage>
        <taxon>Archaea</taxon>
        <taxon>Methanobacteriati</taxon>
        <taxon>Methanobacteriota</taxon>
        <taxon>Methanomada group</taxon>
        <taxon>Methanococci</taxon>
        <taxon>Methanococcales</taxon>
        <taxon>Methanococcaceae</taxon>
        <taxon>Methanococcus</taxon>
    </lineage>
</organism>
<comment type="function">
    <text evidence="1">Catalyzes the hydrolysis of glutamine to glutamate and ammonia as part of the biosynthesis of pyridoxal 5'-phosphate. The resulting ammonia molecule is channeled to the active site of PdxS.</text>
</comment>
<comment type="catalytic activity">
    <reaction evidence="1">
        <text>aldehydo-D-ribose 5-phosphate + D-glyceraldehyde 3-phosphate + L-glutamine = pyridoxal 5'-phosphate + L-glutamate + phosphate + 3 H2O + H(+)</text>
        <dbReference type="Rhea" id="RHEA:31507"/>
        <dbReference type="ChEBI" id="CHEBI:15377"/>
        <dbReference type="ChEBI" id="CHEBI:15378"/>
        <dbReference type="ChEBI" id="CHEBI:29985"/>
        <dbReference type="ChEBI" id="CHEBI:43474"/>
        <dbReference type="ChEBI" id="CHEBI:58273"/>
        <dbReference type="ChEBI" id="CHEBI:58359"/>
        <dbReference type="ChEBI" id="CHEBI:59776"/>
        <dbReference type="ChEBI" id="CHEBI:597326"/>
        <dbReference type="EC" id="4.3.3.6"/>
    </reaction>
</comment>
<comment type="catalytic activity">
    <reaction evidence="1">
        <text>L-glutamine + H2O = L-glutamate + NH4(+)</text>
        <dbReference type="Rhea" id="RHEA:15889"/>
        <dbReference type="ChEBI" id="CHEBI:15377"/>
        <dbReference type="ChEBI" id="CHEBI:28938"/>
        <dbReference type="ChEBI" id="CHEBI:29985"/>
        <dbReference type="ChEBI" id="CHEBI:58359"/>
        <dbReference type="EC" id="3.5.1.2"/>
    </reaction>
</comment>
<comment type="pathway">
    <text evidence="1">Cofactor biosynthesis; pyridoxal 5'-phosphate biosynthesis.</text>
</comment>
<comment type="subunit">
    <text evidence="1">In the presence of PdxS, forms a dodecamer of heterodimers. Only shows activity in the heterodimer.</text>
</comment>
<comment type="similarity">
    <text evidence="1">Belongs to the glutaminase PdxT/SNO family.</text>
</comment>
<gene>
    <name evidence="1" type="primary">pdxT</name>
    <name type="ordered locus">Mevan_0956</name>
</gene>
<name>PDXT_METVS</name>
<proteinExistence type="inferred from homology"/>
<dbReference type="EC" id="4.3.3.6" evidence="1"/>
<dbReference type="EC" id="3.5.1.2" evidence="1"/>
<dbReference type="EMBL" id="CP000742">
    <property type="protein sequence ID" value="ABR54859.1"/>
    <property type="molecule type" value="Genomic_DNA"/>
</dbReference>
<dbReference type="RefSeq" id="WP_012065788.1">
    <property type="nucleotide sequence ID" value="NC_009634.1"/>
</dbReference>
<dbReference type="SMR" id="A6UQT7"/>
<dbReference type="STRING" id="406327.Mevan_0956"/>
<dbReference type="MEROPS" id="C26.A32"/>
<dbReference type="GeneID" id="5325955"/>
<dbReference type="KEGG" id="mvn:Mevan_0956"/>
<dbReference type="eggNOG" id="arCOG00034">
    <property type="taxonomic scope" value="Archaea"/>
</dbReference>
<dbReference type="HOGENOM" id="CLU_069674_2_0_2"/>
<dbReference type="OrthoDB" id="26717at2157"/>
<dbReference type="UniPathway" id="UPA00245"/>
<dbReference type="Proteomes" id="UP000001107">
    <property type="component" value="Chromosome"/>
</dbReference>
<dbReference type="GO" id="GO:0005829">
    <property type="term" value="C:cytosol"/>
    <property type="evidence" value="ECO:0007669"/>
    <property type="project" value="TreeGrafter"/>
</dbReference>
<dbReference type="GO" id="GO:1903600">
    <property type="term" value="C:glutaminase complex"/>
    <property type="evidence" value="ECO:0007669"/>
    <property type="project" value="TreeGrafter"/>
</dbReference>
<dbReference type="GO" id="GO:0004359">
    <property type="term" value="F:glutaminase activity"/>
    <property type="evidence" value="ECO:0007669"/>
    <property type="project" value="UniProtKB-UniRule"/>
</dbReference>
<dbReference type="GO" id="GO:0036381">
    <property type="term" value="F:pyridoxal 5'-phosphate synthase (glutamine hydrolysing) activity"/>
    <property type="evidence" value="ECO:0007669"/>
    <property type="project" value="UniProtKB-UniRule"/>
</dbReference>
<dbReference type="GO" id="GO:0006543">
    <property type="term" value="P:glutamine catabolic process"/>
    <property type="evidence" value="ECO:0007669"/>
    <property type="project" value="UniProtKB-UniRule"/>
</dbReference>
<dbReference type="GO" id="GO:0042823">
    <property type="term" value="P:pyridoxal phosphate biosynthetic process"/>
    <property type="evidence" value="ECO:0007669"/>
    <property type="project" value="UniProtKB-UniRule"/>
</dbReference>
<dbReference type="GO" id="GO:0008614">
    <property type="term" value="P:pyridoxine metabolic process"/>
    <property type="evidence" value="ECO:0007669"/>
    <property type="project" value="TreeGrafter"/>
</dbReference>
<dbReference type="CDD" id="cd01749">
    <property type="entry name" value="GATase1_PB"/>
    <property type="match status" value="1"/>
</dbReference>
<dbReference type="FunFam" id="3.40.50.880:FF:000010">
    <property type="entry name" value="uncharacterized protein LOC100176842 isoform X2"/>
    <property type="match status" value="1"/>
</dbReference>
<dbReference type="Gene3D" id="3.40.50.880">
    <property type="match status" value="1"/>
</dbReference>
<dbReference type="HAMAP" id="MF_01615">
    <property type="entry name" value="PdxT"/>
    <property type="match status" value="1"/>
</dbReference>
<dbReference type="InterPro" id="IPR029062">
    <property type="entry name" value="Class_I_gatase-like"/>
</dbReference>
<dbReference type="InterPro" id="IPR002161">
    <property type="entry name" value="PdxT/SNO"/>
</dbReference>
<dbReference type="InterPro" id="IPR021196">
    <property type="entry name" value="PdxT/SNO_CS"/>
</dbReference>
<dbReference type="NCBIfam" id="TIGR03800">
    <property type="entry name" value="PLP_synth_Pdx2"/>
    <property type="match status" value="1"/>
</dbReference>
<dbReference type="PANTHER" id="PTHR31559">
    <property type="entry name" value="PYRIDOXAL 5'-PHOSPHATE SYNTHASE SUBUNIT SNO"/>
    <property type="match status" value="1"/>
</dbReference>
<dbReference type="PANTHER" id="PTHR31559:SF0">
    <property type="entry name" value="PYRIDOXAL 5'-PHOSPHATE SYNTHASE SUBUNIT SNO1-RELATED"/>
    <property type="match status" value="1"/>
</dbReference>
<dbReference type="Pfam" id="PF01174">
    <property type="entry name" value="SNO"/>
    <property type="match status" value="1"/>
</dbReference>
<dbReference type="PIRSF" id="PIRSF005639">
    <property type="entry name" value="Glut_amidoT_SNO"/>
    <property type="match status" value="1"/>
</dbReference>
<dbReference type="SUPFAM" id="SSF52317">
    <property type="entry name" value="Class I glutamine amidotransferase-like"/>
    <property type="match status" value="1"/>
</dbReference>
<dbReference type="PROSITE" id="PS01236">
    <property type="entry name" value="PDXT_SNO_1"/>
    <property type="match status" value="1"/>
</dbReference>
<dbReference type="PROSITE" id="PS51130">
    <property type="entry name" value="PDXT_SNO_2"/>
    <property type="match status" value="1"/>
</dbReference>
<protein>
    <recommendedName>
        <fullName evidence="1">Pyridoxal 5'-phosphate synthase subunit PdxT</fullName>
        <ecNumber evidence="1">4.3.3.6</ecNumber>
    </recommendedName>
    <alternativeName>
        <fullName evidence="1">Pdx2</fullName>
    </alternativeName>
    <alternativeName>
        <fullName evidence="1">Pyridoxal 5'-phosphate synthase glutaminase subunit</fullName>
        <ecNumber evidence="1">3.5.1.2</ecNumber>
    </alternativeName>
</protein>
<keyword id="KW-0315">Glutamine amidotransferase</keyword>
<keyword id="KW-0378">Hydrolase</keyword>
<keyword id="KW-0456">Lyase</keyword>
<keyword id="KW-0663">Pyridoxal phosphate</keyword>
<evidence type="ECO:0000255" key="1">
    <source>
        <dbReference type="HAMAP-Rule" id="MF_01615"/>
    </source>
</evidence>
<sequence>MKIIGILGIQGDIEEHEIAVKKINCIPKRIRSVSDLDEIDALIIPGGESTTIGKLMVKYGFIEKIRNLDIPILGTCAGMVLLSKGTGKEQPLLKILNVTIKRNAYGSQKDSFEKEIILDGKKLNAVFIRAPMVDKILEKTVEIISKDGESIVGVREGNIMAISFHPELSNDGIILYEYFLKNFVEKN</sequence>
<accession>A6UQT7</accession>